<accession>Q67160</accession>
<organismHost>
    <name type="scientific">Aves</name>
    <dbReference type="NCBI Taxonomy" id="8782"/>
</organismHost>
<organismHost>
    <name type="scientific">Sus scrofa</name>
    <name type="common">Pig</name>
    <dbReference type="NCBI Taxonomy" id="9823"/>
</organismHost>
<protein>
    <recommendedName>
        <fullName evidence="1">Matrix protein 2</fullName>
    </recommendedName>
    <alternativeName>
        <fullName evidence="1">Proton channel protein M2</fullName>
    </alternativeName>
</protein>
<gene>
    <name evidence="1" type="primary">M</name>
</gene>
<keyword id="KW-0025">Alternative splicing</keyword>
<keyword id="KW-1015">Disulfide bond</keyword>
<keyword id="KW-1032">Host cell membrane</keyword>
<keyword id="KW-1043">Host membrane</keyword>
<keyword id="KW-0945">Host-virus interaction</keyword>
<keyword id="KW-0375">Hydrogen ion transport</keyword>
<keyword id="KW-1083">Inhibition of host autophagy by virus</keyword>
<keyword id="KW-0407">Ion channel</keyword>
<keyword id="KW-0406">Ion transport</keyword>
<keyword id="KW-0449">Lipoprotein</keyword>
<keyword id="KW-0472">Membrane</keyword>
<keyword id="KW-0564">Palmitate</keyword>
<keyword id="KW-0597">Phosphoprotein</keyword>
<keyword id="KW-0735">Signal-anchor</keyword>
<keyword id="KW-0812">Transmembrane</keyword>
<keyword id="KW-1133">Transmembrane helix</keyword>
<keyword id="KW-0813">Transport</keyword>
<keyword id="KW-1182">Viral ion channel</keyword>
<keyword id="KW-0946">Virion</keyword>
<name>M2_I77AG</name>
<feature type="chain" id="PRO_0000326361" description="Matrix protein 2">
    <location>
        <begin position="1"/>
        <end position="97"/>
    </location>
</feature>
<feature type="topological domain" description="Virion surface" evidence="1">
    <location>
        <begin position="1"/>
        <end position="22"/>
    </location>
</feature>
<feature type="transmembrane region" description="Helical; Signal-anchor for type III membrane protein" evidence="1">
    <location>
        <begin position="23"/>
        <end position="43"/>
    </location>
</feature>
<feature type="topological domain" description="Intravirion" evidence="1">
    <location>
        <begin position="44"/>
        <end position="97"/>
    </location>
</feature>
<feature type="region of interest" description="Disordered" evidence="2">
    <location>
        <begin position="60"/>
        <end position="81"/>
    </location>
</feature>
<feature type="site" description="Essential for channel activity, possibly by being protonated during channel activation, and by forming the channel gate and the selective filter" evidence="1">
    <location>
        <position position="37"/>
    </location>
</feature>
<feature type="site" description="Seems to be involved in pH gating" evidence="1">
    <location>
        <position position="41"/>
    </location>
</feature>
<feature type="modified residue" description="Phosphoserine; by host" evidence="1">
    <location>
        <position position="64"/>
    </location>
</feature>
<feature type="modified residue" description="Phosphoserine; by host" evidence="1">
    <location>
        <position position="82"/>
    </location>
</feature>
<feature type="lipid moiety-binding region" description="S-palmitoyl cysteine; by host" evidence="1">
    <location>
        <position position="50"/>
    </location>
</feature>
<feature type="disulfide bond" description="Interchain (with C-17)" evidence="1">
    <location>
        <position position="17"/>
    </location>
</feature>
<feature type="disulfide bond" description="Interchain (with C-19)" evidence="1">
    <location>
        <position position="19"/>
    </location>
</feature>
<sequence>MSLLTEVETPTKNGWECKCSDSSDPLIIAASIIGILHLILWILDRLFFKCIYRRLKYGLKRGPSTEGVPESMREEYRQEQQSVVDVDDGHFVNIELE</sequence>
<dbReference type="EMBL" id="M63536">
    <property type="protein sequence ID" value="AAA43279.1"/>
    <property type="molecule type" value="Genomic_RNA"/>
</dbReference>
<dbReference type="SMR" id="Q67160"/>
<dbReference type="GO" id="GO:0020002">
    <property type="term" value="C:host cell plasma membrane"/>
    <property type="evidence" value="ECO:0007669"/>
    <property type="project" value="UniProtKB-SubCell"/>
</dbReference>
<dbReference type="GO" id="GO:0016020">
    <property type="term" value="C:membrane"/>
    <property type="evidence" value="ECO:0007669"/>
    <property type="project" value="UniProtKB-UniRule"/>
</dbReference>
<dbReference type="GO" id="GO:0055036">
    <property type="term" value="C:virion membrane"/>
    <property type="evidence" value="ECO:0007669"/>
    <property type="project" value="UniProtKB-SubCell"/>
</dbReference>
<dbReference type="GO" id="GO:0005216">
    <property type="term" value="F:monoatomic ion channel activity"/>
    <property type="evidence" value="ECO:0007669"/>
    <property type="project" value="UniProtKB-UniRule"/>
</dbReference>
<dbReference type="GO" id="GO:0015078">
    <property type="term" value="F:proton transmembrane transporter activity"/>
    <property type="evidence" value="ECO:0007669"/>
    <property type="project" value="UniProtKB-UniRule"/>
</dbReference>
<dbReference type="GO" id="GO:0051259">
    <property type="term" value="P:protein complex oligomerization"/>
    <property type="evidence" value="ECO:0007669"/>
    <property type="project" value="UniProtKB-UniRule"/>
</dbReference>
<dbReference type="GO" id="GO:0044694">
    <property type="term" value="P:symbiont genome entry into host cell via pore formation in plasma membrane"/>
    <property type="evidence" value="ECO:0007669"/>
    <property type="project" value="UniProtKB-UniRule"/>
</dbReference>
<dbReference type="GO" id="GO:0140321">
    <property type="term" value="P:symbiont-mediated suppression of host autophagy"/>
    <property type="evidence" value="ECO:0007669"/>
    <property type="project" value="UniProtKB-KW"/>
</dbReference>
<dbReference type="Gene3D" id="6.10.250.1640">
    <property type="match status" value="1"/>
</dbReference>
<dbReference type="HAMAP" id="MF_04069">
    <property type="entry name" value="INFV_M2"/>
    <property type="match status" value="1"/>
</dbReference>
<dbReference type="InterPro" id="IPR002089">
    <property type="entry name" value="Flu_M2"/>
</dbReference>
<dbReference type="Pfam" id="PF00599">
    <property type="entry name" value="Flu_M2"/>
    <property type="match status" value="1"/>
</dbReference>
<proteinExistence type="inferred from homology"/>
<comment type="function">
    <text evidence="1">Forms a proton-selective ion channel that is necessary for the efficient release of the viral genome during virus entry. After attaching to the cell surface, the virion enters the cell by endocytosis. Acidification of the endosome triggers M2 ion channel activity. The influx of protons into virion interior is believed to disrupt interactions between the viral ribonucleoprotein (RNP), matrix protein 1 (M1), and lipid bilayers, thereby freeing the viral genome from interaction with viral proteins and enabling RNA segments to migrate to the host cell nucleus, where influenza virus RNA transcription and replication occur. Also plays a role in viral proteins secretory pathway. Elevates the intravesicular pH of normally acidic compartments, such as trans-Golgi network, preventing newly formed hemagglutinin from premature switching to the fusion-active conformation.</text>
</comment>
<comment type="activity regulation">
    <text>The M2 protein from most influenza A strains is inhibited by amantadine and rimantadine, resulting in viral uncoating incapacity. Emergence of amantadine-resistant variants is usually rapid.</text>
</comment>
<comment type="subunit">
    <text evidence="1">Homotetramer; composed of two disulfide-linked dimers held together by non-covalent interactions. May interact with matrix protein 1.</text>
</comment>
<comment type="subcellular location">
    <subcellularLocation>
        <location evidence="1">Virion membrane</location>
    </subcellularLocation>
    <subcellularLocation>
        <location evidence="1">Host apical cell membrane</location>
        <topology evidence="1">Single-pass type III membrane protein</topology>
    </subcellularLocation>
    <text evidence="1">Abundantly expressed at the apical plasma membrane in infected polarized epithelial cells, in close proximity to budding and assembled virions. Minor component of virions (only 16-20 molecules/virion).</text>
</comment>
<comment type="alternative products">
    <event type="alternative splicing"/>
    <isoform>
        <id>Q67160-1</id>
        <name>M2</name>
        <sequence type="displayed"/>
    </isoform>
    <isoform>
        <id>Q67161-1</id>
        <name>M1</name>
        <sequence type="external"/>
    </isoform>
    <text>Only the first 9 residues are shared by the 2 isoforms.</text>
</comment>
<comment type="domain">
    <text evidence="1">Cytoplasmic tail plays an important role in virion assembly and morphogenesis.</text>
</comment>
<comment type="miscellaneous">
    <text evidence="1">When the channel is activated, one or more imidazole moieties of His-37 probably become bi-protonated.</text>
</comment>
<comment type="similarity">
    <text evidence="1">Belongs to the influenza viruses matrix protein M2 family.</text>
</comment>
<evidence type="ECO:0000255" key="1">
    <source>
        <dbReference type="HAMAP-Rule" id="MF_04069"/>
    </source>
</evidence>
<evidence type="ECO:0000256" key="2">
    <source>
        <dbReference type="SAM" id="MobiDB-lite"/>
    </source>
</evidence>
<organism>
    <name type="scientific">Influenza A virus (strain A/Budgerigar/Hokkaido/1/1977 H4N6)</name>
    <dbReference type="NCBI Taxonomy" id="385587"/>
    <lineage>
        <taxon>Viruses</taxon>
        <taxon>Riboviria</taxon>
        <taxon>Orthornavirae</taxon>
        <taxon>Negarnaviricota</taxon>
        <taxon>Polyploviricotina</taxon>
        <taxon>Insthoviricetes</taxon>
        <taxon>Articulavirales</taxon>
        <taxon>Orthomyxoviridae</taxon>
        <taxon>Alphainfluenzavirus</taxon>
        <taxon>Alphainfluenzavirus influenzae</taxon>
        <taxon>Influenza A virus</taxon>
    </lineage>
</organism>
<reference key="1">
    <citation type="journal article" date="1991" name="J. Virol.">
        <title>Evolutionary analysis of the influenza A virus M gene with comparison of the M1 and M2 proteins.</title>
        <authorList>
            <person name="Ito T."/>
            <person name="Gorman O.T."/>
            <person name="Kawaoka Y."/>
            <person name="Bean W.J."/>
            <person name="Webster R.G."/>
        </authorList>
    </citation>
    <scope>NUCLEOTIDE SEQUENCE [GENOMIC RNA]</scope>
</reference>